<reference key="1">
    <citation type="journal article" date="2001" name="Mol. Cell. Neurosci.">
        <title>Mouse DREAM/calsenilin/KChIP3: gene structure, coding potential and expression.</title>
        <authorList>
            <person name="Spreafico F."/>
            <person name="Barski J.J."/>
            <person name="Farina C."/>
            <person name="Meyer M."/>
        </authorList>
    </citation>
    <scope>NUCLEOTIDE SEQUENCE [MRNA] (ISOFORMS 1; 2; 3)</scope>
    <scope>NUCLEOTIDE SEQUENCE [GENOMIC DNA]</scope>
    <scope>TISSUE SPECIFICITY</scope>
    <scope>VARIANT SER-14</scope>
    <source>
        <strain>129/Ola</strain>
        <strain>C57BL/6J</strain>
    </source>
</reference>
<reference key="2">
    <citation type="submission" date="1999-09" db="EMBL/GenBank/DDBJ databases">
        <title>Cloning and characterization of mouse calsenilin/DREAM.</title>
        <authorList>
            <person name="Jo D.G."/>
            <person name="Kim M."/>
            <person name="Jung Y.K."/>
        </authorList>
    </citation>
    <scope>NUCLEOTIDE SEQUENCE [MRNA] (ISOFORM 1)</scope>
</reference>
<reference key="3">
    <citation type="submission" date="2000-06" db="EMBL/GenBank/DDBJ databases">
        <title>Allele of Mus musculus Dream/calsenilin gene.</title>
        <authorList>
            <person name="Deng L."/>
            <person name="Reid R.E."/>
            <person name="Leavitt B."/>
            <person name="Hayden M.R."/>
        </authorList>
    </citation>
    <scope>NUCLEOTIDE SEQUENCE [MRNA] (ISOFORM 1)</scope>
    <scope>VARIANT SER-14</scope>
    <source>
        <strain>FVB/NJ</strain>
        <tissue>Brain</tissue>
    </source>
</reference>
<reference key="4">
    <citation type="submission" date="2000-08" db="EMBL/GenBank/DDBJ databases">
        <authorList>
            <person name="Lee H.G."/>
            <person name="Choi J.K."/>
            <person name="Choi E.K."/>
            <person name="Wasco W."/>
            <person name="Buxbaum J.D."/>
            <person name="Beier D.R."/>
            <person name="Kim Y.S."/>
        </authorList>
    </citation>
    <scope>NUCLEOTIDE SEQUENCE [MRNA] (ISOFORM 1)</scope>
    <scope>VARIANT SER-14</scope>
    <source>
        <strain>BALB/cJ</strain>
    </source>
</reference>
<reference key="5">
    <citation type="journal article" date="2004" name="Genome Res.">
        <title>The status, quality, and expansion of the NIH full-length cDNA project: the Mammalian Gene Collection (MGC).</title>
        <authorList>
            <consortium name="The MGC Project Team"/>
        </authorList>
    </citation>
    <scope>NUCLEOTIDE SEQUENCE [LARGE SCALE MRNA] (ISOFORM 1)</scope>
    <source>
        <strain>C57BL/6J</strain>
        <tissue>Brain</tissue>
        <tissue>Eye</tissue>
        <tissue>Olfactory epithelium</tissue>
    </source>
</reference>
<reference key="6">
    <citation type="journal article" date="2000" name="Nature">
        <title>Modulation of A-type potassium channels by a family of calcium sensors.</title>
        <authorList>
            <person name="An W.F."/>
            <person name="Bowlby M.R."/>
            <person name="Betty M."/>
            <person name="Cao J."/>
            <person name="Ling H.-P."/>
            <person name="Mendoza G."/>
            <person name="Hinson J.W."/>
            <person name="Mattsson K.I."/>
            <person name="Strassle B.W."/>
            <person name="Trimmer J.S."/>
            <person name="Rhodes K.J."/>
        </authorList>
    </citation>
    <scope>TISSUE SPECIFICITY</scope>
</reference>
<reference key="7">
    <citation type="journal article" date="2001" name="EMBO J.">
        <title>Tuning pacemaker frequency of individual dopaminergic neurons by Kv4.3L and KChip3.1 transcription.</title>
        <authorList>
            <person name="Liss B."/>
            <person name="Franz O."/>
            <person name="Sewing S."/>
            <person name="Bruns R."/>
            <person name="Neuhoff H."/>
            <person name="Roeper J."/>
        </authorList>
    </citation>
    <scope>INTERACTION WITH KCND3</scope>
</reference>
<reference key="8">
    <citation type="journal article" date="2002" name="Cell">
        <title>DREAM is a critical transcriptional repressor for pain modulation.</title>
        <authorList>
            <person name="Cheng H.Y."/>
            <person name="Pitcher G.M."/>
            <person name="Laviolette S.R."/>
            <person name="Whishaw I.Q."/>
            <person name="Tong K.I."/>
            <person name="Kockeritz L.K."/>
            <person name="Wada T."/>
            <person name="Joza N.A."/>
            <person name="Crackower M."/>
            <person name="Goncalves J."/>
            <person name="Sarosi I."/>
            <person name="Woodgett J.R."/>
            <person name="Oliveira-dos-Santos A.J."/>
            <person name="Ikura M."/>
            <person name="van der Kooy D."/>
            <person name="Salter M.W."/>
            <person name="Penninger J.M."/>
        </authorList>
    </citation>
    <scope>FUNCTION</scope>
</reference>
<reference key="9">
    <citation type="journal article" date="2002" name="J. Neurosci.">
        <title>PKA modulation of Kv4.2-encoded A-type potassium channels requires formation of a supramolecular complex.</title>
        <authorList>
            <person name="Schrader L.A."/>
            <person name="Anderson A.E."/>
            <person name="Mayne A."/>
            <person name="Pfaffinger P.J."/>
            <person name="Sweatt J.D."/>
        </authorList>
    </citation>
    <scope>INTERACTION WITH KCND2</scope>
</reference>
<reference key="10">
    <citation type="journal article" date="2003" name="Am. J. Physiol.">
        <title>Functional properties of a brain-specific NH2-terminally spliced modulator of Kv4 channels.</title>
        <authorList>
            <person name="Boland L.M."/>
            <person name="Jiang M."/>
            <person name="Lee S.Y."/>
            <person name="Fahrenkrug S.C."/>
            <person name="Harnett M.T."/>
            <person name="O'Grady S.M."/>
        </authorList>
    </citation>
    <scope>TISSUE SPECIFICITY</scope>
</reference>
<reference key="11">
    <citation type="journal article" date="2003" name="J. Neurosci.">
        <title>Altered Abeta formation and long-term potentiation in a calsenilin knock-out.</title>
        <authorList>
            <person name="Lilliehook C."/>
            <person name="Bozdagi O."/>
            <person name="Yao J."/>
            <person name="Gomez-Ramirez M."/>
            <person name="Zaidi N.F."/>
            <person name="Wasco W."/>
            <person name="Gandy S."/>
            <person name="Santucci A.C."/>
            <person name="Haroutunian V."/>
            <person name="Huntley G.W."/>
            <person name="Buxbaum J.D."/>
        </authorList>
    </citation>
    <scope>FUNCTION</scope>
</reference>
<reference key="12">
    <citation type="journal article" date="2004" name="Brain Res. Mol. Brain Res.">
        <title>Differential distribution of KChIPs mRNAs in adult mouse brain.</title>
        <authorList>
            <person name="Xiong H."/>
            <person name="Kovacs I."/>
            <person name="Zhang Z."/>
        </authorList>
    </citation>
    <scope>TISSUE SPECIFICITY</scope>
</reference>
<reference key="13">
    <citation type="journal article" date="2005" name="J. Biol. Chem.">
        <title>Mg2+ and Ca2+ differentially regulate DNA binding and dimerization of DREAM.</title>
        <authorList>
            <person name="Osawa M."/>
            <person name="Dace A."/>
            <person name="Tong K.I."/>
            <person name="Valiveti A."/>
            <person name="Ikura M."/>
            <person name="Ames J.B."/>
        </authorList>
    </citation>
    <scope>DNA-BINDING</scope>
    <scope>CALCIUM-BINDING</scope>
    <scope>SUBUNIT</scope>
    <scope>MUTAGENESIS OF GLU-186 AND GLU-234</scope>
</reference>
<reference key="14">
    <citation type="journal article" date="2009" name="Channels">
        <title>Proteomic analyses of native brain K(V)4.2 channel complexes.</title>
        <authorList>
            <person name="Marionneau C."/>
            <person name="LeDuc R.D."/>
            <person name="Rohrs H.W."/>
            <person name="Link A.J."/>
            <person name="Townsend R.R."/>
            <person name="Nerbonne J.M."/>
        </authorList>
    </citation>
    <scope>SUBUNIT</scope>
    <scope>IDENTIFICATION BY MASS SPECTROMETRY</scope>
</reference>
<reference key="15">
    <citation type="journal article" date="2010" name="Cell">
        <title>A tissue-specific atlas of mouse protein phosphorylation and expression.</title>
        <authorList>
            <person name="Huttlin E.L."/>
            <person name="Jedrychowski M.P."/>
            <person name="Elias J.E."/>
            <person name="Goswami T."/>
            <person name="Rad R."/>
            <person name="Beausoleil S.A."/>
            <person name="Villen J."/>
            <person name="Haas W."/>
            <person name="Sowa M.E."/>
            <person name="Gygi S.P."/>
        </authorList>
    </citation>
    <scope>PHOSPHORYLATION [LARGE SCALE ANALYSIS] AT SER-60</scope>
    <scope>IDENTIFICATION BY MASS SPECTROMETRY [LARGE SCALE ANALYSIS]</scope>
    <source>
        <tissue>Brain</tissue>
    </source>
</reference>
<reference key="16">
    <citation type="journal article" date="2010" name="J. Neurosci.">
        <title>Interdependent roles for accessory KChIP2, KChIP3, and KChIP4 subunits in the generation of Kv4-encoded IA channels in cortical pyramidal neurons.</title>
        <authorList>
            <person name="Norris A.J."/>
            <person name="Foeger N.C."/>
            <person name="Nerbonne J.M."/>
        </authorList>
    </citation>
    <scope>FUNCTION IN POTASSIUM TRANSPORT</scope>
    <scope>INTERACTION WITH KCND2</scope>
</reference>
<reference key="17">
    <citation type="journal article" date="2012" name="J. Biol. Chem.">
        <title>Augmentation of Kv4.2-encoded currents by accessory dipeptidyl peptidase 6 and 10 subunits reflects selective cell surface Kv4.2 protein stabilization.</title>
        <authorList>
            <person name="Foeger N.C."/>
            <person name="Norris A.J."/>
            <person name="Wren L.M."/>
            <person name="Nerbonne J.M."/>
        </authorList>
    </citation>
    <scope>FUNCTION IN POTASSIUM TRANSPORT</scope>
    <scope>SUBCELLULAR LOCATION</scope>
</reference>
<reference key="18">
    <citation type="journal article" date="2008" name="Biochemistry">
        <title>NMR structure of DREAM: implications for Ca(2+)-dependent DNA binding and protein dimerization.</title>
        <authorList>
            <person name="Lusin J.D."/>
            <person name="Vanarotti M."/>
            <person name="Li C."/>
            <person name="Valiveti A."/>
            <person name="Ames J.B."/>
        </authorList>
    </citation>
    <scope>STRUCTURE BY NMR</scope>
    <scope>SUBUNIT</scope>
    <scope>DNA-BINDING</scope>
    <scope>CALCIUM-BINDING</scope>
</reference>
<keyword id="KW-0002">3D-structure</keyword>
<keyword id="KW-0025">Alternative splicing</keyword>
<keyword id="KW-0053">Apoptosis</keyword>
<keyword id="KW-0106">Calcium</keyword>
<keyword id="KW-1003">Cell membrane</keyword>
<keyword id="KW-0963">Cytoplasm</keyword>
<keyword id="KW-0256">Endoplasmic reticulum</keyword>
<keyword id="KW-0333">Golgi apparatus</keyword>
<keyword id="KW-0407">Ion channel</keyword>
<keyword id="KW-0406">Ion transport</keyword>
<keyword id="KW-1017">Isopeptide bond</keyword>
<keyword id="KW-0449">Lipoprotein</keyword>
<keyword id="KW-0472">Membrane</keyword>
<keyword id="KW-0479">Metal-binding</keyword>
<keyword id="KW-0539">Nucleus</keyword>
<keyword id="KW-0564">Palmitate</keyword>
<keyword id="KW-0597">Phosphoprotein</keyword>
<keyword id="KW-0630">Potassium</keyword>
<keyword id="KW-0631">Potassium channel</keyword>
<keyword id="KW-0633">Potassium transport</keyword>
<keyword id="KW-1185">Reference proteome</keyword>
<keyword id="KW-0677">Repeat</keyword>
<keyword id="KW-0678">Repressor</keyword>
<keyword id="KW-0804">Transcription</keyword>
<keyword id="KW-0805">Transcription regulation</keyword>
<keyword id="KW-0813">Transport</keyword>
<keyword id="KW-0832">Ubl conjugation</keyword>
<keyword id="KW-0851">Voltage-gated channel</keyword>
<protein>
    <recommendedName>
        <fullName>Calsenilin</fullName>
    </recommendedName>
    <alternativeName>
        <fullName>A-type potassium channel modulatory protein 3</fullName>
    </alternativeName>
    <alternativeName>
        <fullName>DRE-antagonist modulator</fullName>
        <shortName>DREAM</shortName>
    </alternativeName>
    <alternativeName>
        <fullName>Kv channel-interacting protein 3</fullName>
        <shortName>KChIP3</shortName>
    </alternativeName>
</protein>
<dbReference type="EMBL" id="AF287732">
    <property type="protein sequence ID" value="AAK08175.1"/>
    <property type="molecule type" value="mRNA"/>
</dbReference>
<dbReference type="EMBL" id="AF287733">
    <property type="protein sequence ID" value="AAK08180.1"/>
    <property type="molecule type" value="mRNA"/>
</dbReference>
<dbReference type="EMBL" id="AF287737">
    <property type="protein sequence ID" value="AAK08176.1"/>
    <property type="molecule type" value="Genomic_DNA"/>
</dbReference>
<dbReference type="EMBL" id="AF287734">
    <property type="protein sequence ID" value="AAK08176.1"/>
    <property type="status" value="JOINED"/>
    <property type="molecule type" value="Genomic_DNA"/>
</dbReference>
<dbReference type="EMBL" id="AF287735">
    <property type="protein sequence ID" value="AAK08176.1"/>
    <property type="status" value="JOINED"/>
    <property type="molecule type" value="Genomic_DNA"/>
</dbReference>
<dbReference type="EMBL" id="AF287736">
    <property type="protein sequence ID" value="AAK08176.1"/>
    <property type="status" value="JOINED"/>
    <property type="molecule type" value="Genomic_DNA"/>
</dbReference>
<dbReference type="EMBL" id="AF287737">
    <property type="protein sequence ID" value="AAK08177.1"/>
    <property type="molecule type" value="Genomic_DNA"/>
</dbReference>
<dbReference type="EMBL" id="AF287734">
    <property type="protein sequence ID" value="AAK08177.1"/>
    <property type="status" value="JOINED"/>
    <property type="molecule type" value="Genomic_DNA"/>
</dbReference>
<dbReference type="EMBL" id="AF287735">
    <property type="protein sequence ID" value="AAK08177.1"/>
    <property type="status" value="JOINED"/>
    <property type="molecule type" value="Genomic_DNA"/>
</dbReference>
<dbReference type="EMBL" id="AF287736">
    <property type="protein sequence ID" value="AAK08177.1"/>
    <property type="status" value="JOINED"/>
    <property type="molecule type" value="Genomic_DNA"/>
</dbReference>
<dbReference type="EMBL" id="AF287737">
    <property type="protein sequence ID" value="AAK08179.1"/>
    <property type="molecule type" value="Genomic_DNA"/>
</dbReference>
<dbReference type="EMBL" id="AF287734">
    <property type="protein sequence ID" value="AAK08179.1"/>
    <property type="status" value="JOINED"/>
    <property type="molecule type" value="Genomic_DNA"/>
</dbReference>
<dbReference type="EMBL" id="AF287735">
    <property type="protein sequence ID" value="AAK08179.1"/>
    <property type="status" value="JOINED"/>
    <property type="molecule type" value="Genomic_DNA"/>
</dbReference>
<dbReference type="EMBL" id="AF287736">
    <property type="protein sequence ID" value="AAK08179.1"/>
    <property type="status" value="JOINED"/>
    <property type="molecule type" value="Genomic_DNA"/>
</dbReference>
<dbReference type="EMBL" id="AF184624">
    <property type="protein sequence ID" value="AAF14576.1"/>
    <property type="molecule type" value="mRNA"/>
</dbReference>
<dbReference type="EMBL" id="AF274050">
    <property type="protein sequence ID" value="AAF74784.1"/>
    <property type="molecule type" value="mRNA"/>
</dbReference>
<dbReference type="EMBL" id="AF300870">
    <property type="protein sequence ID" value="AAG17450.1"/>
    <property type="molecule type" value="mRNA"/>
</dbReference>
<dbReference type="EMBL" id="BC026980">
    <property type="protein sequence ID" value="AAH26980.1"/>
    <property type="molecule type" value="mRNA"/>
</dbReference>
<dbReference type="EMBL" id="BC047139">
    <property type="protein sequence ID" value="AAH47139.1"/>
    <property type="molecule type" value="mRNA"/>
</dbReference>
<dbReference type="EMBL" id="BC057329">
    <property type="protein sequence ID" value="AAH57329.1"/>
    <property type="molecule type" value="mRNA"/>
</dbReference>
<dbReference type="CCDS" id="CCDS16703.1">
    <molecule id="Q9QXT8-1"/>
</dbReference>
<dbReference type="CCDS" id="CCDS71139.1">
    <molecule id="Q9QXT8-3"/>
</dbReference>
<dbReference type="RefSeq" id="NP_001104801.1">
    <property type="nucleotide sequence ID" value="NM_001111331.1"/>
</dbReference>
<dbReference type="RefSeq" id="NP_001277934.1">
    <property type="nucleotide sequence ID" value="NM_001291005.1"/>
</dbReference>
<dbReference type="RefSeq" id="NP_062763.2">
    <molecule id="Q9QXT8-1"/>
    <property type="nucleotide sequence ID" value="NM_019789.4"/>
</dbReference>
<dbReference type="PDB" id="2JUL">
    <property type="method" value="NMR"/>
    <property type="chains" value="A=1-256"/>
</dbReference>
<dbReference type="PDBsum" id="2JUL"/>
<dbReference type="BMRB" id="Q9QXT8"/>
<dbReference type="SMR" id="Q9QXT8"/>
<dbReference type="BioGRID" id="208000">
    <property type="interactions" value="2"/>
</dbReference>
<dbReference type="FunCoup" id="Q9QXT8">
    <property type="interactions" value="109"/>
</dbReference>
<dbReference type="IntAct" id="Q9QXT8">
    <property type="interactions" value="2"/>
</dbReference>
<dbReference type="MINT" id="Q9QXT8"/>
<dbReference type="STRING" id="10090.ENSMUSP00000028850"/>
<dbReference type="iPTMnet" id="Q9QXT8"/>
<dbReference type="PhosphoSitePlus" id="Q9QXT8"/>
<dbReference type="SwissPalm" id="Q9QXT8"/>
<dbReference type="jPOST" id="Q9QXT8"/>
<dbReference type="PaxDb" id="10090-ENSMUSP00000099504"/>
<dbReference type="ProteomicsDB" id="284031">
    <molecule id="Q9QXT8-1"/>
</dbReference>
<dbReference type="ProteomicsDB" id="284032">
    <molecule id="Q9QXT8-2"/>
</dbReference>
<dbReference type="ProteomicsDB" id="284033">
    <molecule id="Q9QXT8-3"/>
</dbReference>
<dbReference type="ABCD" id="Q9QXT8">
    <property type="antibodies" value="2 sequenced antibodies"/>
</dbReference>
<dbReference type="Antibodypedia" id="4181">
    <property type="antibodies" value="544 antibodies from 40 providers"/>
</dbReference>
<dbReference type="DNASU" id="56461"/>
<dbReference type="Ensembl" id="ENSMUST00000103215.11">
    <molecule id="Q9QXT8-1"/>
    <property type="protein sequence ID" value="ENSMUSP00000099504.5"/>
    <property type="gene ID" value="ENSMUSG00000079056.14"/>
</dbReference>
<dbReference type="GeneID" id="56461"/>
<dbReference type="KEGG" id="mmu:56461"/>
<dbReference type="UCSC" id="uc008mfm.2">
    <molecule id="Q9QXT8-1"/>
    <property type="organism name" value="mouse"/>
</dbReference>
<dbReference type="AGR" id="MGI:1929258"/>
<dbReference type="CTD" id="30818"/>
<dbReference type="MGI" id="MGI:1929258">
    <property type="gene designation" value="Kcnip3"/>
</dbReference>
<dbReference type="VEuPathDB" id="HostDB:ENSMUSG00000079056"/>
<dbReference type="eggNOG" id="KOG0044">
    <property type="taxonomic scope" value="Eukaryota"/>
</dbReference>
<dbReference type="GeneTree" id="ENSGT00940000158782"/>
<dbReference type="InParanoid" id="Q9QXT8"/>
<dbReference type="OrthoDB" id="191686at2759"/>
<dbReference type="TreeFam" id="TF318560"/>
<dbReference type="Reactome" id="R-MMU-5576894">
    <property type="pathway name" value="Phase 1 - inactivation of fast Na+ channels"/>
</dbReference>
<dbReference type="BioGRID-ORCS" id="56461">
    <property type="hits" value="2 hits in 77 CRISPR screens"/>
</dbReference>
<dbReference type="ChiTaRS" id="Kcnip3">
    <property type="organism name" value="mouse"/>
</dbReference>
<dbReference type="EvolutionaryTrace" id="Q9QXT8"/>
<dbReference type="Proteomes" id="UP000000589">
    <property type="component" value="Chromosome 2"/>
</dbReference>
<dbReference type="RNAct" id="Q9QXT8">
    <property type="molecule type" value="protein"/>
</dbReference>
<dbReference type="Bgee" id="ENSMUSG00000079056">
    <property type="expression patterns" value="Expressed in lumbar dorsal root ganglion and 158 other cell types or tissues"/>
</dbReference>
<dbReference type="ExpressionAtlas" id="Q9QXT8">
    <property type="expression patterns" value="baseline and differential"/>
</dbReference>
<dbReference type="GO" id="GO:0005829">
    <property type="term" value="C:cytosol"/>
    <property type="evidence" value="ECO:0000314"/>
    <property type="project" value="UniProtKB"/>
</dbReference>
<dbReference type="GO" id="GO:0005783">
    <property type="term" value="C:endoplasmic reticulum"/>
    <property type="evidence" value="ECO:0007669"/>
    <property type="project" value="UniProtKB-SubCell"/>
</dbReference>
<dbReference type="GO" id="GO:0005794">
    <property type="term" value="C:Golgi apparatus"/>
    <property type="evidence" value="ECO:0007669"/>
    <property type="project" value="UniProtKB-SubCell"/>
</dbReference>
<dbReference type="GO" id="GO:0005634">
    <property type="term" value="C:nucleus"/>
    <property type="evidence" value="ECO:0000314"/>
    <property type="project" value="MGI"/>
</dbReference>
<dbReference type="GO" id="GO:0032993">
    <property type="term" value="C:protein-DNA complex"/>
    <property type="evidence" value="ECO:0000315"/>
    <property type="project" value="CAFA"/>
</dbReference>
<dbReference type="GO" id="GO:0008076">
    <property type="term" value="C:voltage-gated potassium channel complex"/>
    <property type="evidence" value="ECO:0000314"/>
    <property type="project" value="UniProtKB"/>
</dbReference>
<dbReference type="GO" id="GO:0005509">
    <property type="term" value="F:calcium ion binding"/>
    <property type="evidence" value="ECO:0000315"/>
    <property type="project" value="CAFA"/>
</dbReference>
<dbReference type="GO" id="GO:0048306">
    <property type="term" value="F:calcium-dependent protein binding"/>
    <property type="evidence" value="ECO:0000353"/>
    <property type="project" value="CAFA"/>
</dbReference>
<dbReference type="GO" id="GO:0001046">
    <property type="term" value="F:core promoter sequence-specific DNA binding"/>
    <property type="evidence" value="ECO:0000315"/>
    <property type="project" value="CAFA"/>
</dbReference>
<dbReference type="GO" id="GO:0003677">
    <property type="term" value="F:DNA binding"/>
    <property type="evidence" value="ECO:0000314"/>
    <property type="project" value="MGI"/>
</dbReference>
<dbReference type="GO" id="GO:0000287">
    <property type="term" value="F:magnesium ion binding"/>
    <property type="evidence" value="ECO:0000315"/>
    <property type="project" value="CAFA"/>
</dbReference>
<dbReference type="GO" id="GO:0005267">
    <property type="term" value="F:potassium channel activity"/>
    <property type="evidence" value="ECO:0007669"/>
    <property type="project" value="UniProtKB-KW"/>
</dbReference>
<dbReference type="GO" id="GO:0015459">
    <property type="term" value="F:potassium channel regulator activity"/>
    <property type="evidence" value="ECO:0000315"/>
    <property type="project" value="UniProtKB"/>
</dbReference>
<dbReference type="GO" id="GO:0042803">
    <property type="term" value="F:protein homodimerization activity"/>
    <property type="evidence" value="ECO:0000269"/>
    <property type="project" value="DisProt"/>
</dbReference>
<dbReference type="GO" id="GO:0006915">
    <property type="term" value="P:apoptotic process"/>
    <property type="evidence" value="ECO:0007669"/>
    <property type="project" value="UniProtKB-KW"/>
</dbReference>
<dbReference type="GO" id="GO:0048266">
    <property type="term" value="P:behavioral response to pain"/>
    <property type="evidence" value="ECO:0000315"/>
    <property type="project" value="MGI"/>
</dbReference>
<dbReference type="GO" id="GO:0045892">
    <property type="term" value="P:negative regulation of DNA-templated transcription"/>
    <property type="evidence" value="ECO:0000304"/>
    <property type="project" value="MGI"/>
</dbReference>
<dbReference type="GO" id="GO:0000122">
    <property type="term" value="P:negative regulation of transcription by RNA polymerase II"/>
    <property type="evidence" value="ECO:0000315"/>
    <property type="project" value="MGI"/>
</dbReference>
<dbReference type="GO" id="GO:0006813">
    <property type="term" value="P:potassium ion transport"/>
    <property type="evidence" value="ECO:0000304"/>
    <property type="project" value="MGI"/>
</dbReference>
<dbReference type="GO" id="GO:0072659">
    <property type="term" value="P:protein localization to plasma membrane"/>
    <property type="evidence" value="ECO:0000314"/>
    <property type="project" value="UniProtKB"/>
</dbReference>
<dbReference type="GO" id="GO:0043523">
    <property type="term" value="P:regulation of neuron apoptotic process"/>
    <property type="evidence" value="ECO:0000314"/>
    <property type="project" value="MGI"/>
</dbReference>
<dbReference type="GO" id="GO:1901379">
    <property type="term" value="P:regulation of potassium ion transmembrane transport"/>
    <property type="evidence" value="ECO:0000315"/>
    <property type="project" value="UniProtKB"/>
</dbReference>
<dbReference type="GO" id="GO:0032026">
    <property type="term" value="P:response to magnesium ion"/>
    <property type="evidence" value="ECO:0000315"/>
    <property type="project" value="UniProtKB"/>
</dbReference>
<dbReference type="GO" id="GO:0048265">
    <property type="term" value="P:response to pain"/>
    <property type="evidence" value="ECO:0000315"/>
    <property type="project" value="MGI"/>
</dbReference>
<dbReference type="GO" id="GO:0019233">
    <property type="term" value="P:sensory perception of pain"/>
    <property type="evidence" value="ECO:0000315"/>
    <property type="project" value="MGI"/>
</dbReference>
<dbReference type="CDD" id="cd00051">
    <property type="entry name" value="EFh"/>
    <property type="match status" value="2"/>
</dbReference>
<dbReference type="DisProt" id="DP00291"/>
<dbReference type="FunFam" id="1.10.238.10:FF:000043">
    <property type="entry name" value="Kv channel-interacting protein 1 isoform 2"/>
    <property type="match status" value="1"/>
</dbReference>
<dbReference type="Gene3D" id="1.10.238.10">
    <property type="entry name" value="EF-hand"/>
    <property type="match status" value="1"/>
</dbReference>
<dbReference type="InterPro" id="IPR011992">
    <property type="entry name" value="EF-hand-dom_pair"/>
</dbReference>
<dbReference type="InterPro" id="IPR018247">
    <property type="entry name" value="EF_Hand_1_Ca_BS"/>
</dbReference>
<dbReference type="InterPro" id="IPR002048">
    <property type="entry name" value="EF_hand_dom"/>
</dbReference>
<dbReference type="InterPro" id="IPR028846">
    <property type="entry name" value="Recoverin"/>
</dbReference>
<dbReference type="PANTHER" id="PTHR23055">
    <property type="entry name" value="CALCIUM BINDING PROTEINS"/>
    <property type="match status" value="1"/>
</dbReference>
<dbReference type="PANTHER" id="PTHR23055:SF165">
    <property type="entry name" value="CALSENILIN"/>
    <property type="match status" value="1"/>
</dbReference>
<dbReference type="Pfam" id="PF13499">
    <property type="entry name" value="EF-hand_7"/>
    <property type="match status" value="1"/>
</dbReference>
<dbReference type="Pfam" id="PF13833">
    <property type="entry name" value="EF-hand_8"/>
    <property type="match status" value="1"/>
</dbReference>
<dbReference type="PRINTS" id="PR00450">
    <property type="entry name" value="RECOVERIN"/>
</dbReference>
<dbReference type="SMART" id="SM00054">
    <property type="entry name" value="EFh"/>
    <property type="match status" value="3"/>
</dbReference>
<dbReference type="SUPFAM" id="SSF47473">
    <property type="entry name" value="EF-hand"/>
    <property type="match status" value="1"/>
</dbReference>
<dbReference type="PROSITE" id="PS00018">
    <property type="entry name" value="EF_HAND_1"/>
    <property type="match status" value="2"/>
</dbReference>
<dbReference type="PROSITE" id="PS50222">
    <property type="entry name" value="EF_HAND_2"/>
    <property type="match status" value="3"/>
</dbReference>
<proteinExistence type="evidence at protein level"/>
<name>CSEN_MOUSE</name>
<sequence>MQRTKEAVKASDGNLLGDPGRIPLSKRESIKWQRPRFTRQALMRCCLIKWILSSAAPQGSDSSDSELELSTVRHQPEGLDQLQAQTKFTKKELQSLYRGFKNECPTGLVDEDTFKLIYSQFFPQGDATTYAHFLFNAFDADGNGAIHFEDFVVGLSILLRGTVHEKLKWAFNLYDINKDGCITKEEMLAIMKSIYDMMGRHTYPILREDAPLEHVERFFQKMDRNQDGVVTIDEFLETCQKDENIMNSMQLFENVI</sequence>
<feature type="chain" id="PRO_0000073815" description="Calsenilin">
    <location>
        <begin position="1"/>
        <end position="256"/>
    </location>
</feature>
<feature type="domain" description="EF-hand 1; degenerate" evidence="20">
    <location>
        <begin position="67"/>
        <end position="123"/>
    </location>
</feature>
<feature type="domain" description="EF-hand 2" evidence="3">
    <location>
        <begin position="126"/>
        <end position="161"/>
    </location>
</feature>
<feature type="domain" description="EF-hand 3" evidence="3">
    <location>
        <begin position="162"/>
        <end position="197"/>
    </location>
</feature>
<feature type="domain" description="EF-hand 4" evidence="3">
    <location>
        <begin position="210"/>
        <end position="245"/>
    </location>
</feature>
<feature type="region of interest" description="Disordered" evidence="4">
    <location>
        <begin position="1"/>
        <end position="22"/>
    </location>
</feature>
<feature type="region of interest" description="Interaction with KCND2" evidence="1">
    <location>
        <begin position="243"/>
        <end position="256"/>
    </location>
</feature>
<feature type="binding site" evidence="3">
    <location>
        <position position="175"/>
    </location>
    <ligand>
        <name>Ca(2+)</name>
        <dbReference type="ChEBI" id="CHEBI:29108"/>
        <label>1</label>
    </ligand>
</feature>
<feature type="binding site" evidence="3">
    <location>
        <position position="177"/>
    </location>
    <ligand>
        <name>Ca(2+)</name>
        <dbReference type="ChEBI" id="CHEBI:29108"/>
        <label>1</label>
    </ligand>
</feature>
<feature type="binding site" evidence="3">
    <location>
        <position position="179"/>
    </location>
    <ligand>
        <name>Ca(2+)</name>
        <dbReference type="ChEBI" id="CHEBI:29108"/>
        <label>1</label>
    </ligand>
</feature>
<feature type="binding site" evidence="3">
    <location>
        <position position="181"/>
    </location>
    <ligand>
        <name>Ca(2+)</name>
        <dbReference type="ChEBI" id="CHEBI:29108"/>
        <label>1</label>
    </ligand>
</feature>
<feature type="binding site" evidence="3">
    <location>
        <position position="186"/>
    </location>
    <ligand>
        <name>Ca(2+)</name>
        <dbReference type="ChEBI" id="CHEBI:29108"/>
        <label>1</label>
    </ligand>
</feature>
<feature type="binding site" evidence="3">
    <location>
        <position position="223"/>
    </location>
    <ligand>
        <name>Ca(2+)</name>
        <dbReference type="ChEBI" id="CHEBI:29108"/>
        <label>2</label>
    </ligand>
</feature>
<feature type="binding site" evidence="3">
    <location>
        <position position="225"/>
    </location>
    <ligand>
        <name>Ca(2+)</name>
        <dbReference type="ChEBI" id="CHEBI:29108"/>
        <label>2</label>
    </ligand>
</feature>
<feature type="binding site" evidence="3">
    <location>
        <position position="227"/>
    </location>
    <ligand>
        <name>Ca(2+)</name>
        <dbReference type="ChEBI" id="CHEBI:29108"/>
        <label>2</label>
    </ligand>
</feature>
<feature type="binding site" evidence="3">
    <location>
        <position position="234"/>
    </location>
    <ligand>
        <name>Ca(2+)</name>
        <dbReference type="ChEBI" id="CHEBI:29108"/>
        <label>2</label>
    </ligand>
</feature>
<feature type="modified residue" description="Phosphoserine" evidence="21">
    <location>
        <position position="60"/>
    </location>
</feature>
<feature type="modified residue" description="Phosphoserine" evidence="2">
    <location>
        <position position="63"/>
    </location>
</feature>
<feature type="lipid moiety-binding region" description="S-palmitoyl cysteine" evidence="1">
    <location>
        <position position="45"/>
    </location>
</feature>
<feature type="lipid moiety-binding region" description="S-palmitoyl cysteine" evidence="1">
    <location>
        <position position="46"/>
    </location>
</feature>
<feature type="cross-link" description="Glycyl lysine isopeptide (Lys-Gly) (interchain with G-Cter in SUMO1)" evidence="2">
    <location>
        <position position="26"/>
    </location>
</feature>
<feature type="cross-link" description="Glycyl lysine isopeptide (Lys-Gly) (interchain with G-Cter in SUMO1)" evidence="2">
    <location>
        <position position="90"/>
    </location>
</feature>
<feature type="splice variant" id="VSP_015041" description="In isoform 3." evidence="19">
    <original>MQRTKEAVKASDGNLLGDPGRIPLSKRESIKWQRPRFTRQALMRCCLIKWILSSAAPQGSD</original>
    <variation>MRQLPAGPSSLACSGCKAGRLVTVPFSSRDAEDQGSREGIGWQPPGRSWAHTTEQEGKHQVAKATVHPPGPDALLLNQVDPVQCCPTRL</variation>
    <location>
        <begin position="1"/>
        <end position="61"/>
    </location>
</feature>
<feature type="splice variant" id="VSP_015042" description="In isoform 2." evidence="19">
    <original>DSSDSELELSTVRHQPEGLDQLQAQTKFTKKELQSLYRGFKNECPTGLVDEDTFKLIYSQFFPQGDATTYAHFLFNAFDADGNGAIHFEDFVVGLSILLRGTVHEKLKWAFNLYDINKDGCITKEEMLAIMKSIYDMMGRHTYPILREDAPLEHVERFFQKMDRNQDGVVTIDEFLETCQKDENIMNSMQLFENVI</original>
    <variation>AVTVNWSYPRCAISQRAWTSYKLRPSSPRRSCSPFTEASRMSVPQAWWMKTPSNSFIPSSSLREMPPPMHTSSSMPSMLMGTGPSTLRTLWLGSPSCFEGRSMRSSSGPSISMTLTRMVASPRRRCWPS</variation>
    <location>
        <begin position="61"/>
        <end position="256"/>
    </location>
</feature>
<feature type="sequence variant" description="In strain: 129/Ola, BALB/c and FVB/NJ." evidence="6 17 18">
    <original>N</original>
    <variation>S</variation>
    <location>
        <position position="14"/>
    </location>
</feature>
<feature type="mutagenesis site" description="Abolishes calcium-binding." evidence="13">
    <original>E</original>
    <variation>Q</variation>
    <location>
        <position position="186"/>
    </location>
</feature>
<feature type="mutagenesis site" description="Abolishes calcium-binding." evidence="13">
    <original>E</original>
    <variation>Q</variation>
    <location>
        <position position="234"/>
    </location>
</feature>
<feature type="sequence conflict" description="In Ref. 2; AAF14576." evidence="20" ref="2">
    <original>M</original>
    <variation>T</variation>
    <location>
        <position position="246"/>
    </location>
</feature>
<feature type="helix" evidence="22">
    <location>
        <begin position="78"/>
        <end position="85"/>
    </location>
</feature>
<feature type="helix" evidence="22">
    <location>
        <begin position="90"/>
        <end position="103"/>
    </location>
</feature>
<feature type="strand" evidence="22">
    <location>
        <begin position="107"/>
        <end position="110"/>
    </location>
</feature>
<feature type="helix" evidence="22">
    <location>
        <begin position="111"/>
        <end position="121"/>
    </location>
</feature>
<feature type="helix" evidence="22">
    <location>
        <begin position="128"/>
        <end position="137"/>
    </location>
</feature>
<feature type="strand" evidence="22">
    <location>
        <begin position="144"/>
        <end position="146"/>
    </location>
</feature>
<feature type="helix" evidence="22">
    <location>
        <begin position="149"/>
        <end position="159"/>
    </location>
</feature>
<feature type="helix" evidence="22">
    <location>
        <begin position="163"/>
        <end position="173"/>
    </location>
</feature>
<feature type="strand" evidence="22">
    <location>
        <begin position="177"/>
        <end position="180"/>
    </location>
</feature>
<feature type="helix" evidence="22">
    <location>
        <begin position="184"/>
        <end position="197"/>
    </location>
</feature>
<feature type="helix" evidence="22">
    <location>
        <begin position="211"/>
        <end position="221"/>
    </location>
</feature>
<feature type="helix" evidence="22">
    <location>
        <begin position="232"/>
        <end position="241"/>
    </location>
</feature>
<feature type="helix" evidence="22">
    <location>
        <begin position="245"/>
        <end position="255"/>
    </location>
</feature>
<evidence type="ECO:0000250" key="1"/>
<evidence type="ECO:0000250" key="2">
    <source>
        <dbReference type="UniProtKB" id="Q9Y2W7"/>
    </source>
</evidence>
<evidence type="ECO:0000255" key="3">
    <source>
        <dbReference type="PROSITE-ProRule" id="PRU00448"/>
    </source>
</evidence>
<evidence type="ECO:0000256" key="4">
    <source>
        <dbReference type="SAM" id="MobiDB-lite"/>
    </source>
</evidence>
<evidence type="ECO:0000269" key="5">
    <source>
    </source>
</evidence>
<evidence type="ECO:0000269" key="6">
    <source>
    </source>
</evidence>
<evidence type="ECO:0000269" key="7">
    <source>
    </source>
</evidence>
<evidence type="ECO:0000269" key="8">
    <source>
    </source>
</evidence>
<evidence type="ECO:0000269" key="9">
    <source>
    </source>
</evidence>
<evidence type="ECO:0000269" key="10">
    <source>
    </source>
</evidence>
<evidence type="ECO:0000269" key="11">
    <source>
    </source>
</evidence>
<evidence type="ECO:0000269" key="12">
    <source>
    </source>
</evidence>
<evidence type="ECO:0000269" key="13">
    <source>
    </source>
</evidence>
<evidence type="ECO:0000269" key="14">
    <source>
    </source>
</evidence>
<evidence type="ECO:0000269" key="15">
    <source>
    </source>
</evidence>
<evidence type="ECO:0000269" key="16">
    <source>
    </source>
</evidence>
<evidence type="ECO:0000269" key="17">
    <source ref="3"/>
</evidence>
<evidence type="ECO:0000269" key="18">
    <source ref="4"/>
</evidence>
<evidence type="ECO:0000303" key="19">
    <source>
    </source>
</evidence>
<evidence type="ECO:0000305" key="20"/>
<evidence type="ECO:0007744" key="21">
    <source>
    </source>
</evidence>
<evidence type="ECO:0007829" key="22">
    <source>
        <dbReference type="PDB" id="2JUL"/>
    </source>
</evidence>
<comment type="function">
    <text evidence="8 11">Calcium-dependent transcriptional repressor that binds to the DRE element of genes including PDYN and FOS. Affinity for DNA is reduced upon binding to calcium and enhanced by binding to magnesium. Seems to be involved in nociception.</text>
</comment>
<comment type="function">
    <text evidence="15 16">Regulatory subunit of Kv4/D (Shal)-type voltage-gated rapidly inactivating A-type potassium channels, such as KCND2/Kv4.2 and KCND3/Kv4.3. Modulates channel expression at the cell membrane, gating characteristics, inactivation kinetics and rate of recovery from inactivation in a calcium-dependent and isoform-specific manner.</text>
</comment>
<comment type="function">
    <text evidence="2">May play a role in the regulation of PSEN2 proteolytic processing and apoptosis. Together with PSEN2 involved in modulation of amyloid-beta formation (By similarity).</text>
</comment>
<comment type="subunit">
    <text evidence="7 9 13 14 15 20">Binds to DNA as a homomultimer. Dimerization is induced by binding to calcium (PubMed:18201103). Interacts with the C-terminus of PSEN1 and PSEN2 and with PSEN2 CTF subunit. Associates with KCN1. Component of heteromultimeric potassium channels (PubMed:19713751). Identified in potassium channel complexes containing KCND1, KCND2, KCND3, KCNIP1, KCNIP2, KCNIP3, KCNIP4, DPP6 and DPP10 (PubMed:19713751). Interacts with KCND2 and KCND3 (PubMed:11598014, PubMed:12451113, PubMed:20943905).</text>
</comment>
<comment type="interaction">
    <interactant intactId="EBI-11720427">
        <id>Q9QXT8</id>
    </interactant>
    <interactant intactId="EBI-21309044">
        <id>Q61144</id>
        <label>Psen2</label>
    </interactant>
    <organismsDiffer>false</organismsDiffer>
    <experiments>3</experiments>
</comment>
<comment type="interaction">
    <interactant intactId="EBI-11720427">
        <id>Q9QXT8</id>
    </interactant>
    <interactant intactId="EBI-21396390">
        <id>PRO_0000025608</id>
        <label>Psen2</label>
        <dbReference type="UniProtKB" id="Q61144"/>
    </interactant>
    <organismsDiffer>false</organismsDiffer>
    <experiments>3</experiments>
</comment>
<comment type="subcellular location">
    <subcellularLocation>
        <location evidence="16">Cytoplasm</location>
    </subcellularLocation>
    <subcellularLocation>
        <location evidence="2">Cell membrane</location>
        <topology>Lipid-anchor</topology>
    </subcellularLocation>
    <subcellularLocation>
        <location evidence="2">Endoplasmic reticulum</location>
    </subcellularLocation>
    <subcellularLocation>
        <location evidence="2">Golgi apparatus</location>
    </subcellularLocation>
    <subcellularLocation>
        <location evidence="2">Nucleus</location>
    </subcellularLocation>
    <text evidence="2">The sumoylated form is present only in the nucleus. In the presence of PSEN2, associated with the endoplasmic reticulum and Golgi.</text>
</comment>
<comment type="alternative products">
    <event type="alternative splicing"/>
    <isoform>
        <id>Q9QXT8-1</id>
        <name>1</name>
        <name>Calsenilin/KChIP3 T+</name>
        <sequence type="displayed"/>
    </isoform>
    <isoform>
        <id>Q9QXT8-2</id>
        <name>2</name>
        <name>Calsenilin/KChIP3 T-</name>
        <sequence type="described" ref="VSP_015042"/>
    </isoform>
    <isoform>
        <id>Q9QXT8-3</id>
        <name>3</name>
        <name>DREAM T-</name>
        <sequence type="described" ref="VSP_015041"/>
    </isoform>
    <isoform>
        <id>P0C092-1</id>
        <name>4</name>
        <name>DREAM T+</name>
        <sequence type="external"/>
    </isoform>
</comment>
<comment type="tissue specificity">
    <text evidence="5 6 10 12">Highly expressed in brain. Isoform 1 or isoform 4 (T+ forms) are expressed at equal levels with isoform 2 or isoform 3 (T- forms). Primarily detected in the layer V and deep layer VI of the cerebral cortex, the hippocampus, and the entire cerebellum. Expressed at low levels in testis. Also expressed in heart.</text>
</comment>
<comment type="PTM">
    <text evidence="1">Palmitoylated. Palmitoylation enhances association with the plasma membrane (By similarity).</text>
</comment>
<comment type="PTM">
    <text evidence="1">Proteolytically cleaved by caspase-3.</text>
</comment>
<comment type="miscellaneous">
    <text>Mice deficient for Csen show a significant decrease of amyloid-beta protein 40 and beta-amyloid protein 42, and display markedly reduced responses in models of acute thermal, mechanical, and visceral pain.</text>
</comment>
<comment type="miscellaneous">
    <molecule>Isoform 2</molecule>
    <text evidence="20">Lacks EF-hand domains.</text>
</comment>
<comment type="similarity">
    <text evidence="20">Belongs to the recoverin family.</text>
</comment>
<accession>Q9QXT8</accession>
<accession>Q924L0</accession>
<accession>Q99PH9</accession>
<accession>Q99PI0</accession>
<accession>Q99PI2</accession>
<accession>Q99PI3</accession>
<accession>Q9JHZ5</accession>
<gene>
    <name type="primary">Kcnip3</name>
    <name type="synonym">Csen</name>
    <name type="synonym">Dream</name>
    <name type="synonym">Kchip3</name>
</gene>
<organism>
    <name type="scientific">Mus musculus</name>
    <name type="common">Mouse</name>
    <dbReference type="NCBI Taxonomy" id="10090"/>
    <lineage>
        <taxon>Eukaryota</taxon>
        <taxon>Metazoa</taxon>
        <taxon>Chordata</taxon>
        <taxon>Craniata</taxon>
        <taxon>Vertebrata</taxon>
        <taxon>Euteleostomi</taxon>
        <taxon>Mammalia</taxon>
        <taxon>Eutheria</taxon>
        <taxon>Euarchontoglires</taxon>
        <taxon>Glires</taxon>
        <taxon>Rodentia</taxon>
        <taxon>Myomorpha</taxon>
        <taxon>Muroidea</taxon>
        <taxon>Muridae</taxon>
        <taxon>Murinae</taxon>
        <taxon>Mus</taxon>
        <taxon>Mus</taxon>
    </lineage>
</organism>